<gene>
    <name evidence="1" type="primary">leuC</name>
    <name type="ordered locus">BWG_0068</name>
</gene>
<protein>
    <recommendedName>
        <fullName evidence="1">3-isopropylmalate dehydratase large subunit</fullName>
        <ecNumber evidence="1">4.2.1.33</ecNumber>
    </recommendedName>
    <alternativeName>
        <fullName evidence="1">Alpha-IPM isomerase</fullName>
        <shortName evidence="1">IPMI</shortName>
    </alternativeName>
    <alternativeName>
        <fullName evidence="1">Isopropylmalate isomerase</fullName>
    </alternativeName>
</protein>
<evidence type="ECO:0000255" key="1">
    <source>
        <dbReference type="HAMAP-Rule" id="MF_01026"/>
    </source>
</evidence>
<keyword id="KW-0004">4Fe-4S</keyword>
<keyword id="KW-0028">Amino-acid biosynthesis</keyword>
<keyword id="KW-0100">Branched-chain amino acid biosynthesis</keyword>
<keyword id="KW-0408">Iron</keyword>
<keyword id="KW-0411">Iron-sulfur</keyword>
<keyword id="KW-0432">Leucine biosynthesis</keyword>
<keyword id="KW-0456">Lyase</keyword>
<keyword id="KW-0479">Metal-binding</keyword>
<feature type="chain" id="PRO_1000213326" description="3-isopropylmalate dehydratase large subunit">
    <location>
        <begin position="1"/>
        <end position="466"/>
    </location>
</feature>
<feature type="binding site" evidence="1">
    <location>
        <position position="347"/>
    </location>
    <ligand>
        <name>[4Fe-4S] cluster</name>
        <dbReference type="ChEBI" id="CHEBI:49883"/>
    </ligand>
</feature>
<feature type="binding site" evidence="1">
    <location>
        <position position="407"/>
    </location>
    <ligand>
        <name>[4Fe-4S] cluster</name>
        <dbReference type="ChEBI" id="CHEBI:49883"/>
    </ligand>
</feature>
<feature type="binding site" evidence="1">
    <location>
        <position position="410"/>
    </location>
    <ligand>
        <name>[4Fe-4S] cluster</name>
        <dbReference type="ChEBI" id="CHEBI:49883"/>
    </ligand>
</feature>
<comment type="function">
    <text evidence="1">Catalyzes the isomerization between 2-isopropylmalate and 3-isopropylmalate, via the formation of 2-isopropylmaleate.</text>
</comment>
<comment type="catalytic activity">
    <reaction evidence="1">
        <text>(2R,3S)-3-isopropylmalate = (2S)-2-isopropylmalate</text>
        <dbReference type="Rhea" id="RHEA:32287"/>
        <dbReference type="ChEBI" id="CHEBI:1178"/>
        <dbReference type="ChEBI" id="CHEBI:35121"/>
        <dbReference type="EC" id="4.2.1.33"/>
    </reaction>
</comment>
<comment type="cofactor">
    <cofactor evidence="1">
        <name>[4Fe-4S] cluster</name>
        <dbReference type="ChEBI" id="CHEBI:49883"/>
    </cofactor>
    <text evidence="1">Binds 1 [4Fe-4S] cluster per subunit.</text>
</comment>
<comment type="pathway">
    <text evidence="1">Amino-acid biosynthesis; L-leucine biosynthesis; L-leucine from 3-methyl-2-oxobutanoate: step 2/4.</text>
</comment>
<comment type="subunit">
    <text evidence="1">Heterodimer of LeuC and LeuD.</text>
</comment>
<comment type="similarity">
    <text evidence="1">Belongs to the aconitase/IPM isomerase family. LeuC type 1 subfamily.</text>
</comment>
<proteinExistence type="inferred from homology"/>
<sequence length="466" mass="49882">MAKTLYEKLFDAHVVYEAENETPLLYIDRHLVHEVTSPQAFDGLRAHGRPVRQPGKTFATMDHNVSTQTKDINACGEMARIQMQELIKNCKEFGVELYDLNHPYQGIVHVMGPEQGVTLPGMTIVCGDSHTATHGAFGALAFGIGTSEVEHVLATQTLKQGRAKTMKIEVQGKAAPGITAKDIVLAIIGKTGSAGGTGHVVEFCGEAIRDLSMEGRMTLCNMAIEMGAKAGLVAPDETTFNYVKGRLHAPKGKDFDDAVAYWKTLQTDEGATFDTVVTLQAEEISPQVTWGTNPGQVISVNDNIPDPASFADPVERASAEKALAYMGLKPGIPLTEVAIDKVFIGSCTNSRIEDLRAAAEIAKGRKVAPGVQALVVPGSGPVKAQAEAEGLDKIFIEAGFEWRLPGCSMCLAMNNDRLNPGERCASTSNRNFEGRQGRGGRTHLVSPAMAAAAAVTGHFADIRNIK</sequence>
<name>LEUC_ECOBW</name>
<organism>
    <name type="scientific">Escherichia coli (strain K12 / MC4100 / BW2952)</name>
    <dbReference type="NCBI Taxonomy" id="595496"/>
    <lineage>
        <taxon>Bacteria</taxon>
        <taxon>Pseudomonadati</taxon>
        <taxon>Pseudomonadota</taxon>
        <taxon>Gammaproteobacteria</taxon>
        <taxon>Enterobacterales</taxon>
        <taxon>Enterobacteriaceae</taxon>
        <taxon>Escherichia</taxon>
    </lineage>
</organism>
<dbReference type="EC" id="4.2.1.33" evidence="1"/>
<dbReference type="EMBL" id="CP001396">
    <property type="protein sequence ID" value="ACR61816.1"/>
    <property type="molecule type" value="Genomic_DNA"/>
</dbReference>
<dbReference type="RefSeq" id="WP_001140652.1">
    <property type="nucleotide sequence ID" value="NC_012759.1"/>
</dbReference>
<dbReference type="SMR" id="C4ZPZ5"/>
<dbReference type="GeneID" id="75202111"/>
<dbReference type="KEGG" id="ebw:BWG_0068"/>
<dbReference type="HOGENOM" id="CLU_006714_3_4_6"/>
<dbReference type="UniPathway" id="UPA00048">
    <property type="reaction ID" value="UER00071"/>
</dbReference>
<dbReference type="GO" id="GO:0003861">
    <property type="term" value="F:3-isopropylmalate dehydratase activity"/>
    <property type="evidence" value="ECO:0007669"/>
    <property type="project" value="UniProtKB-UniRule"/>
</dbReference>
<dbReference type="GO" id="GO:0051539">
    <property type="term" value="F:4 iron, 4 sulfur cluster binding"/>
    <property type="evidence" value="ECO:0007669"/>
    <property type="project" value="UniProtKB-KW"/>
</dbReference>
<dbReference type="GO" id="GO:0046872">
    <property type="term" value="F:metal ion binding"/>
    <property type="evidence" value="ECO:0007669"/>
    <property type="project" value="UniProtKB-KW"/>
</dbReference>
<dbReference type="GO" id="GO:0009098">
    <property type="term" value="P:L-leucine biosynthetic process"/>
    <property type="evidence" value="ECO:0007669"/>
    <property type="project" value="UniProtKB-UniRule"/>
</dbReference>
<dbReference type="CDD" id="cd01583">
    <property type="entry name" value="IPMI"/>
    <property type="match status" value="1"/>
</dbReference>
<dbReference type="FunFam" id="3.30.499.10:FF:000006">
    <property type="entry name" value="3-isopropylmalate dehydratase large subunit"/>
    <property type="match status" value="1"/>
</dbReference>
<dbReference type="FunFam" id="3.30.499.10:FF:000007">
    <property type="entry name" value="3-isopropylmalate dehydratase large subunit"/>
    <property type="match status" value="1"/>
</dbReference>
<dbReference type="Gene3D" id="3.30.499.10">
    <property type="entry name" value="Aconitase, domain 3"/>
    <property type="match status" value="2"/>
</dbReference>
<dbReference type="HAMAP" id="MF_01026">
    <property type="entry name" value="LeuC_type1"/>
    <property type="match status" value="1"/>
</dbReference>
<dbReference type="InterPro" id="IPR004430">
    <property type="entry name" value="3-IsopropMal_deHydase_lsu"/>
</dbReference>
<dbReference type="InterPro" id="IPR015931">
    <property type="entry name" value="Acnase/IPM_dHydase_lsu_aba_1/3"/>
</dbReference>
<dbReference type="InterPro" id="IPR001030">
    <property type="entry name" value="Acoase/IPM_deHydtase_lsu_aba"/>
</dbReference>
<dbReference type="InterPro" id="IPR018136">
    <property type="entry name" value="Aconitase_4Fe-4S_BS"/>
</dbReference>
<dbReference type="InterPro" id="IPR036008">
    <property type="entry name" value="Aconitase_4Fe-4S_dom"/>
</dbReference>
<dbReference type="InterPro" id="IPR050067">
    <property type="entry name" value="IPM_dehydratase_rel_enz"/>
</dbReference>
<dbReference type="InterPro" id="IPR033941">
    <property type="entry name" value="IPMI_cat"/>
</dbReference>
<dbReference type="NCBIfam" id="TIGR00170">
    <property type="entry name" value="leuC"/>
    <property type="match status" value="1"/>
</dbReference>
<dbReference type="NCBIfam" id="NF004016">
    <property type="entry name" value="PRK05478.1"/>
    <property type="match status" value="1"/>
</dbReference>
<dbReference type="NCBIfam" id="NF009116">
    <property type="entry name" value="PRK12466.1"/>
    <property type="match status" value="1"/>
</dbReference>
<dbReference type="PANTHER" id="PTHR43822:SF9">
    <property type="entry name" value="3-ISOPROPYLMALATE DEHYDRATASE"/>
    <property type="match status" value="1"/>
</dbReference>
<dbReference type="PANTHER" id="PTHR43822">
    <property type="entry name" value="HOMOACONITASE, MITOCHONDRIAL-RELATED"/>
    <property type="match status" value="1"/>
</dbReference>
<dbReference type="Pfam" id="PF00330">
    <property type="entry name" value="Aconitase"/>
    <property type="match status" value="1"/>
</dbReference>
<dbReference type="PRINTS" id="PR00415">
    <property type="entry name" value="ACONITASE"/>
</dbReference>
<dbReference type="SUPFAM" id="SSF53732">
    <property type="entry name" value="Aconitase iron-sulfur domain"/>
    <property type="match status" value="1"/>
</dbReference>
<dbReference type="PROSITE" id="PS00450">
    <property type="entry name" value="ACONITASE_1"/>
    <property type="match status" value="1"/>
</dbReference>
<dbReference type="PROSITE" id="PS01244">
    <property type="entry name" value="ACONITASE_2"/>
    <property type="match status" value="1"/>
</dbReference>
<accession>C4ZPZ5</accession>
<reference key="1">
    <citation type="journal article" date="2009" name="J. Bacteriol.">
        <title>Genomic sequencing reveals regulatory mutations and recombinational events in the widely used MC4100 lineage of Escherichia coli K-12.</title>
        <authorList>
            <person name="Ferenci T."/>
            <person name="Zhou Z."/>
            <person name="Betteridge T."/>
            <person name="Ren Y."/>
            <person name="Liu Y."/>
            <person name="Feng L."/>
            <person name="Reeves P.R."/>
            <person name="Wang L."/>
        </authorList>
    </citation>
    <scope>NUCLEOTIDE SEQUENCE [LARGE SCALE GENOMIC DNA]</scope>
    <source>
        <strain>K12 / MC4100 / BW2952</strain>
    </source>
</reference>